<protein>
    <recommendedName>
        <fullName evidence="1">2,3,4,5-tetrahydropyridine-2,6-dicarboxylate N-acetyltransferase</fullName>
        <ecNumber evidence="1">2.3.1.89</ecNumber>
    </recommendedName>
    <alternativeName>
        <fullName evidence="1">Tetrahydrodipicolinate N-acetyltransferase</fullName>
        <shortName evidence="1">THP acetyltransferase</shortName>
        <shortName evidence="1">Tetrahydropicolinate acetylase</shortName>
    </alternativeName>
</protein>
<comment type="function">
    <text evidence="1">Catalyzes the transfer of an acetyl group from acetyl-CoA to tetrahydrodipicolinate.</text>
</comment>
<comment type="catalytic activity">
    <reaction evidence="1">
        <text>(S)-2,3,4,5-tetrahydrodipicolinate + acetyl-CoA + H2O = L-2-acetamido-6-oxoheptanedioate + CoA</text>
        <dbReference type="Rhea" id="RHEA:13085"/>
        <dbReference type="ChEBI" id="CHEBI:15377"/>
        <dbReference type="ChEBI" id="CHEBI:16845"/>
        <dbReference type="ChEBI" id="CHEBI:57287"/>
        <dbReference type="ChEBI" id="CHEBI:57288"/>
        <dbReference type="ChEBI" id="CHEBI:58117"/>
        <dbReference type="EC" id="2.3.1.89"/>
    </reaction>
</comment>
<comment type="pathway">
    <text evidence="1">Amino-acid biosynthesis; L-lysine biosynthesis via DAP pathway; LL-2,6-diaminopimelate from (S)-tetrahydrodipicolinate (acetylase route): step 1/3.</text>
</comment>
<comment type="similarity">
    <text evidence="1">Belongs to the transferase hexapeptide repeat family. DapH subfamily.</text>
</comment>
<feature type="chain" id="PRO_0000376657" description="2,3,4,5-tetrahydropyridine-2,6-dicarboxylate N-acetyltransferase">
    <location>
        <begin position="1"/>
        <end position="235"/>
    </location>
</feature>
<gene>
    <name evidence="1" type="primary">dapH</name>
    <name type="ordered locus">Exig_0489</name>
</gene>
<name>DAPH_EXIS2</name>
<keyword id="KW-0012">Acyltransferase</keyword>
<keyword id="KW-0028">Amino-acid biosynthesis</keyword>
<keyword id="KW-0220">Diaminopimelate biosynthesis</keyword>
<keyword id="KW-0457">Lysine biosynthesis</keyword>
<keyword id="KW-1185">Reference proteome</keyword>
<keyword id="KW-0677">Repeat</keyword>
<keyword id="KW-0808">Transferase</keyword>
<organism>
    <name type="scientific">Exiguobacterium sibiricum (strain DSM 17290 / CCUG 55495 / CIP 109462 / JCM 13490 / 255-15)</name>
    <dbReference type="NCBI Taxonomy" id="262543"/>
    <lineage>
        <taxon>Bacteria</taxon>
        <taxon>Bacillati</taxon>
        <taxon>Bacillota</taxon>
        <taxon>Bacilli</taxon>
        <taxon>Bacillales</taxon>
        <taxon>Bacillales Family XII. Incertae Sedis</taxon>
        <taxon>Exiguobacterium</taxon>
    </lineage>
</organism>
<proteinExistence type="inferred from homology"/>
<reference key="1">
    <citation type="submission" date="2008-04" db="EMBL/GenBank/DDBJ databases">
        <title>Complete sequence of chromosome of Exiguobacterium sibiricum 255-15.</title>
        <authorList>
            <consortium name="US DOE Joint Genome Institute"/>
            <person name="Copeland A."/>
            <person name="Lucas S."/>
            <person name="Lapidus A."/>
            <person name="Glavina del Rio T."/>
            <person name="Dalin E."/>
            <person name="Tice H."/>
            <person name="Bruce D."/>
            <person name="Goodwin L."/>
            <person name="Pitluck S."/>
            <person name="Kiss H."/>
            <person name="Chertkov O."/>
            <person name="Monk C."/>
            <person name="Brettin T."/>
            <person name="Detter J.C."/>
            <person name="Han C."/>
            <person name="Kuske C.R."/>
            <person name="Schmutz J."/>
            <person name="Larimer F."/>
            <person name="Land M."/>
            <person name="Hauser L."/>
            <person name="Kyrpides N."/>
            <person name="Mikhailova N."/>
            <person name="Vishnivetskaya T."/>
            <person name="Rodrigues D.F."/>
            <person name="Gilichinsky D."/>
            <person name="Tiedje J."/>
            <person name="Richardson P."/>
        </authorList>
    </citation>
    <scope>NUCLEOTIDE SEQUENCE [LARGE SCALE GENOMIC DNA]</scope>
    <source>
        <strain>DSM 17290 / CCUG 55495 / CIP 109462 / JCM 13490 / 255-15</strain>
    </source>
</reference>
<dbReference type="EC" id="2.3.1.89" evidence="1"/>
<dbReference type="EMBL" id="CP001022">
    <property type="protein sequence ID" value="ACB59971.1"/>
    <property type="molecule type" value="Genomic_DNA"/>
</dbReference>
<dbReference type="RefSeq" id="WP_012369395.1">
    <property type="nucleotide sequence ID" value="NC_010556.1"/>
</dbReference>
<dbReference type="SMR" id="B1YJ41"/>
<dbReference type="STRING" id="262543.Exig_0489"/>
<dbReference type="KEGG" id="esi:Exig_0489"/>
<dbReference type="eggNOG" id="COG2171">
    <property type="taxonomic scope" value="Bacteria"/>
</dbReference>
<dbReference type="HOGENOM" id="CLU_103751_0_0_9"/>
<dbReference type="OrthoDB" id="9788080at2"/>
<dbReference type="UniPathway" id="UPA00034">
    <property type="reaction ID" value="UER00022"/>
</dbReference>
<dbReference type="Proteomes" id="UP000001681">
    <property type="component" value="Chromosome"/>
</dbReference>
<dbReference type="GO" id="GO:0047200">
    <property type="term" value="F:tetrahydrodipicolinate N-acetyltransferase activity"/>
    <property type="evidence" value="ECO:0007669"/>
    <property type="project" value="UniProtKB-EC"/>
</dbReference>
<dbReference type="GO" id="GO:0019877">
    <property type="term" value="P:diaminopimelate biosynthetic process"/>
    <property type="evidence" value="ECO:0007669"/>
    <property type="project" value="UniProtKB-UniRule"/>
</dbReference>
<dbReference type="GO" id="GO:0009089">
    <property type="term" value="P:lysine biosynthetic process via diaminopimelate"/>
    <property type="evidence" value="ECO:0007669"/>
    <property type="project" value="UniProtKB-UniRule"/>
</dbReference>
<dbReference type="CDD" id="cd03350">
    <property type="entry name" value="LbH_THP_succinylT"/>
    <property type="match status" value="1"/>
</dbReference>
<dbReference type="Gene3D" id="2.160.10.10">
    <property type="entry name" value="Hexapeptide repeat proteins"/>
    <property type="match status" value="1"/>
</dbReference>
<dbReference type="Gene3D" id="3.30.70.250">
    <property type="entry name" value="Malonyl-CoA ACP transacylase, ACP-binding"/>
    <property type="match status" value="1"/>
</dbReference>
<dbReference type="HAMAP" id="MF_01691">
    <property type="entry name" value="DapH"/>
    <property type="match status" value="1"/>
</dbReference>
<dbReference type="InterPro" id="IPR019873">
    <property type="entry name" value="DapH"/>
</dbReference>
<dbReference type="InterPro" id="IPR013710">
    <property type="entry name" value="DapH_N"/>
</dbReference>
<dbReference type="InterPro" id="IPR001451">
    <property type="entry name" value="Hexapep"/>
</dbReference>
<dbReference type="InterPro" id="IPR018357">
    <property type="entry name" value="Hexapep_transf_CS"/>
</dbReference>
<dbReference type="InterPro" id="IPR050179">
    <property type="entry name" value="Trans_hexapeptide_repeat"/>
</dbReference>
<dbReference type="InterPro" id="IPR011004">
    <property type="entry name" value="Trimer_LpxA-like_sf"/>
</dbReference>
<dbReference type="NCBIfam" id="TIGR03532">
    <property type="entry name" value="DapD_Ac"/>
    <property type="match status" value="1"/>
</dbReference>
<dbReference type="PANTHER" id="PTHR43300:SF10">
    <property type="entry name" value="2,3,4,5-TETRAHYDROPYRIDINE-2,6-DICARBOXYLATE N-ACETYLTRANSFERASE"/>
    <property type="match status" value="1"/>
</dbReference>
<dbReference type="PANTHER" id="PTHR43300">
    <property type="entry name" value="ACETYLTRANSFERASE"/>
    <property type="match status" value="1"/>
</dbReference>
<dbReference type="Pfam" id="PF08503">
    <property type="entry name" value="DapH_N"/>
    <property type="match status" value="1"/>
</dbReference>
<dbReference type="Pfam" id="PF00132">
    <property type="entry name" value="Hexapep"/>
    <property type="match status" value="1"/>
</dbReference>
<dbReference type="Pfam" id="PF14602">
    <property type="entry name" value="Hexapep_2"/>
    <property type="match status" value="1"/>
</dbReference>
<dbReference type="SUPFAM" id="SSF51161">
    <property type="entry name" value="Trimeric LpxA-like enzymes"/>
    <property type="match status" value="1"/>
</dbReference>
<dbReference type="PROSITE" id="PS00101">
    <property type="entry name" value="HEXAPEP_TRANSFERASES"/>
    <property type="match status" value="1"/>
</dbReference>
<sequence length="235" mass="24675">MLLTDAYEIAKFIKDAKKQTPVKLYVNGDLAGLTIEGATAFGTDQSKIFFADAGLASTFLEEYADRITEVHVEYDRRNSAVPMLDTRHLNARIEPGSWIRDHVVIGDNAVIMMGAIINIGASIGDGTMIDMNAVVGARGTIGKNVHVGAGAVVAGVLEPPSKTPVIIEDGVLIGANAVILEGVRVGKDAVVAAGSVVTEDVPAGSVVAGTPARVIKQKDEKTAEKTQLVDDLRSL</sequence>
<evidence type="ECO:0000255" key="1">
    <source>
        <dbReference type="HAMAP-Rule" id="MF_01691"/>
    </source>
</evidence>
<accession>B1YJ41</accession>